<gene>
    <name evidence="1" type="primary">pyrG</name>
    <name type="ordered locus">llmg_0467</name>
</gene>
<keyword id="KW-0067">ATP-binding</keyword>
<keyword id="KW-0315">Glutamine amidotransferase</keyword>
<keyword id="KW-0436">Ligase</keyword>
<keyword id="KW-0460">Magnesium</keyword>
<keyword id="KW-0479">Metal-binding</keyword>
<keyword id="KW-0547">Nucleotide-binding</keyword>
<keyword id="KW-0665">Pyrimidine biosynthesis</keyword>
<organism>
    <name type="scientific">Lactococcus lactis subsp. cremoris (strain MG1363)</name>
    <dbReference type="NCBI Taxonomy" id="416870"/>
    <lineage>
        <taxon>Bacteria</taxon>
        <taxon>Bacillati</taxon>
        <taxon>Bacillota</taxon>
        <taxon>Bacilli</taxon>
        <taxon>Lactobacillales</taxon>
        <taxon>Streptococcaceae</taxon>
        <taxon>Lactococcus</taxon>
        <taxon>Lactococcus cremoris subsp. cremoris</taxon>
    </lineage>
</organism>
<dbReference type="EC" id="6.3.4.2" evidence="1 2"/>
<dbReference type="EMBL" id="AJ010153">
    <property type="protein sequence ID" value="CAA09021.2"/>
    <property type="molecule type" value="Genomic_DNA"/>
</dbReference>
<dbReference type="EMBL" id="AM406671">
    <property type="protein sequence ID" value="CAL97071.1"/>
    <property type="molecule type" value="Genomic_DNA"/>
</dbReference>
<dbReference type="RefSeq" id="WP_011834508.1">
    <property type="nucleotide sequence ID" value="NC_009004.1"/>
</dbReference>
<dbReference type="SMR" id="O87761"/>
<dbReference type="STRING" id="416870.llmg_0467"/>
<dbReference type="MEROPS" id="C26.964"/>
<dbReference type="KEGG" id="llm:llmg_0467"/>
<dbReference type="eggNOG" id="COG0504">
    <property type="taxonomic scope" value="Bacteria"/>
</dbReference>
<dbReference type="HOGENOM" id="CLU_011675_5_0_9"/>
<dbReference type="OrthoDB" id="9801107at2"/>
<dbReference type="PhylomeDB" id="O87761"/>
<dbReference type="SABIO-RK" id="O87761"/>
<dbReference type="UniPathway" id="UPA00159">
    <property type="reaction ID" value="UER00277"/>
</dbReference>
<dbReference type="Proteomes" id="UP000000364">
    <property type="component" value="Chromosome"/>
</dbReference>
<dbReference type="GO" id="GO:0005829">
    <property type="term" value="C:cytosol"/>
    <property type="evidence" value="ECO:0007669"/>
    <property type="project" value="TreeGrafter"/>
</dbReference>
<dbReference type="GO" id="GO:0005524">
    <property type="term" value="F:ATP binding"/>
    <property type="evidence" value="ECO:0007669"/>
    <property type="project" value="UniProtKB-KW"/>
</dbReference>
<dbReference type="GO" id="GO:0003883">
    <property type="term" value="F:CTP synthase activity"/>
    <property type="evidence" value="ECO:0007669"/>
    <property type="project" value="UniProtKB-UniRule"/>
</dbReference>
<dbReference type="GO" id="GO:0004359">
    <property type="term" value="F:glutaminase activity"/>
    <property type="evidence" value="ECO:0007669"/>
    <property type="project" value="RHEA"/>
</dbReference>
<dbReference type="GO" id="GO:0042802">
    <property type="term" value="F:identical protein binding"/>
    <property type="evidence" value="ECO:0007669"/>
    <property type="project" value="TreeGrafter"/>
</dbReference>
<dbReference type="GO" id="GO:0046872">
    <property type="term" value="F:metal ion binding"/>
    <property type="evidence" value="ECO:0007669"/>
    <property type="project" value="UniProtKB-KW"/>
</dbReference>
<dbReference type="GO" id="GO:0044210">
    <property type="term" value="P:'de novo' CTP biosynthetic process"/>
    <property type="evidence" value="ECO:0007669"/>
    <property type="project" value="UniProtKB-UniRule"/>
</dbReference>
<dbReference type="GO" id="GO:0019856">
    <property type="term" value="P:pyrimidine nucleobase biosynthetic process"/>
    <property type="evidence" value="ECO:0007669"/>
    <property type="project" value="TreeGrafter"/>
</dbReference>
<dbReference type="CDD" id="cd03113">
    <property type="entry name" value="CTPS_N"/>
    <property type="match status" value="1"/>
</dbReference>
<dbReference type="CDD" id="cd01746">
    <property type="entry name" value="GATase1_CTP_Synthase"/>
    <property type="match status" value="1"/>
</dbReference>
<dbReference type="FunFam" id="3.40.50.300:FF:000009">
    <property type="entry name" value="CTP synthase"/>
    <property type="match status" value="1"/>
</dbReference>
<dbReference type="FunFam" id="3.40.50.880:FF:000002">
    <property type="entry name" value="CTP synthase"/>
    <property type="match status" value="1"/>
</dbReference>
<dbReference type="Gene3D" id="3.40.50.880">
    <property type="match status" value="1"/>
</dbReference>
<dbReference type="Gene3D" id="3.40.50.300">
    <property type="entry name" value="P-loop containing nucleotide triphosphate hydrolases"/>
    <property type="match status" value="1"/>
</dbReference>
<dbReference type="HAMAP" id="MF_01227">
    <property type="entry name" value="PyrG"/>
    <property type="match status" value="1"/>
</dbReference>
<dbReference type="InterPro" id="IPR029062">
    <property type="entry name" value="Class_I_gatase-like"/>
</dbReference>
<dbReference type="InterPro" id="IPR004468">
    <property type="entry name" value="CTP_synthase"/>
</dbReference>
<dbReference type="InterPro" id="IPR017456">
    <property type="entry name" value="CTP_synthase_N"/>
</dbReference>
<dbReference type="InterPro" id="IPR017926">
    <property type="entry name" value="GATASE"/>
</dbReference>
<dbReference type="InterPro" id="IPR033828">
    <property type="entry name" value="GATase1_CTP_Synthase"/>
</dbReference>
<dbReference type="InterPro" id="IPR027417">
    <property type="entry name" value="P-loop_NTPase"/>
</dbReference>
<dbReference type="NCBIfam" id="NF003792">
    <property type="entry name" value="PRK05380.1"/>
    <property type="match status" value="1"/>
</dbReference>
<dbReference type="NCBIfam" id="TIGR00337">
    <property type="entry name" value="PyrG"/>
    <property type="match status" value="1"/>
</dbReference>
<dbReference type="PANTHER" id="PTHR11550">
    <property type="entry name" value="CTP SYNTHASE"/>
    <property type="match status" value="1"/>
</dbReference>
<dbReference type="PANTHER" id="PTHR11550:SF0">
    <property type="entry name" value="CTP SYNTHASE-RELATED"/>
    <property type="match status" value="1"/>
</dbReference>
<dbReference type="Pfam" id="PF06418">
    <property type="entry name" value="CTP_synth_N"/>
    <property type="match status" value="1"/>
</dbReference>
<dbReference type="Pfam" id="PF00117">
    <property type="entry name" value="GATase"/>
    <property type="match status" value="1"/>
</dbReference>
<dbReference type="SUPFAM" id="SSF52317">
    <property type="entry name" value="Class I glutamine amidotransferase-like"/>
    <property type="match status" value="1"/>
</dbReference>
<dbReference type="SUPFAM" id="SSF52540">
    <property type="entry name" value="P-loop containing nucleoside triphosphate hydrolases"/>
    <property type="match status" value="1"/>
</dbReference>
<dbReference type="PROSITE" id="PS51273">
    <property type="entry name" value="GATASE_TYPE_1"/>
    <property type="match status" value="1"/>
</dbReference>
<sequence>MSTKYIFVTGGGTSSMGKGIVAASLGRLLKNRGLKVTVQKFDPYLNIDPGTMSPYQHGEVFVTDDGAETDLDLGHYERFIDINLNKYSNVTSGKVYSEILRKERKGEYLGATVQMVPHVTNMLKEKIKRAATTTDADIIITEVGGTVGDMESLPFIEALRQMKAEVGADNVMYIHTVPILHLRAAGELKTKIAQNATKTLREYGIQANMLVLRSEVPITTEMRDKIAMFCDVAPEAVIQSLDVEHLYQIPLNLQAQNMDQIVCDHLKLDAPKADMAEWSAMVDHVMNLKKKVKIALVGKYVELPDAYISVTEALKHAGYASDAEVDINWVNANDVTDENVAELVGDAAGIIVPGGFGQRGTEGKIAAIKYARENDVPMLGICLGMQLTAVEFARNVLGLEGAHSFELDPETKYPVIDIMRDQVDVEDMGGTLRLGLYPAKLKNGSRAKAAYNDAEVVQRRHRHRYEFNNKYREDFEKAGFVFSGVSPDNRLVEIVELSGKKFFVACQYHPELQSRPNRPEELYTEFIRVAVENSK</sequence>
<proteinExistence type="evidence at protein level"/>
<accession>O87761</accession>
<accession>A2RIH6</accession>
<name>PYRG_LACLM</name>
<reference key="1">
    <citation type="journal article" date="2001" name="J. Biol. Chem.">
        <title>Cloning and verification of the Lactococcus lactis pyrG gene and characterization of the gene product, CTP synthase.</title>
        <authorList>
            <person name="Wadskov-Hansen S.L.L."/>
            <person name="Willemoes M."/>
            <person name="Martinussen J."/>
            <person name="Hammer K."/>
            <person name="Neuhard J."/>
            <person name="Larsen S."/>
        </authorList>
    </citation>
    <scope>NUCLEOTIDE SEQUENCE [GENOMIC DNA]</scope>
    <scope>FUNCTION</scope>
    <scope>CATALYTIC ACTIVITY</scope>
    <scope>BIOPHYSICOCHEMICAL PROPERTIES</scope>
    <scope>ACTIVITY REGULATION</scope>
    <scope>DISRUPTION PHENOTYPE</scope>
    <scope>SUBUNIT</scope>
    <scope>PATHWAY</scope>
    <source>
        <strain>MG1363</strain>
    </source>
</reference>
<reference key="2">
    <citation type="journal article" date="2007" name="J. Bacteriol.">
        <title>The complete genome sequence of the lactic acid bacterial paradigm Lactococcus lactis subsp. cremoris MG1363.</title>
        <authorList>
            <person name="Wegmann U."/>
            <person name="O'Connell-Motherway M."/>
            <person name="Zomer A."/>
            <person name="Buist G."/>
            <person name="Shearman C."/>
            <person name="Canchaya C."/>
            <person name="Ventura M."/>
            <person name="Goesmann A."/>
            <person name="Gasson M.J."/>
            <person name="Kuipers O.P."/>
            <person name="van Sinderen D."/>
            <person name="Kok J."/>
        </authorList>
    </citation>
    <scope>NUCLEOTIDE SEQUENCE [LARGE SCALE GENOMIC DNA]</scope>
    <source>
        <strain>MG1363</strain>
    </source>
</reference>
<feature type="chain" id="PRO_0000138192" description="CTP synthase">
    <location>
        <begin position="1"/>
        <end position="535"/>
    </location>
</feature>
<feature type="domain" description="Glutamine amidotransferase type-1" evidence="1">
    <location>
        <begin position="293"/>
        <end position="535"/>
    </location>
</feature>
<feature type="region of interest" description="Amidoligase domain" evidence="1">
    <location>
        <begin position="1"/>
        <end position="268"/>
    </location>
</feature>
<feature type="active site" description="Nucleophile; for glutamine hydrolysis" evidence="1">
    <location>
        <position position="382"/>
    </location>
</feature>
<feature type="active site" evidence="1">
    <location>
        <position position="509"/>
    </location>
</feature>
<feature type="active site" evidence="1">
    <location>
        <position position="511"/>
    </location>
</feature>
<feature type="binding site" evidence="1">
    <location>
        <position position="14"/>
    </location>
    <ligand>
        <name>CTP</name>
        <dbReference type="ChEBI" id="CHEBI:37563"/>
        <note>allosteric inhibitor</note>
    </ligand>
</feature>
<feature type="binding site" evidence="1">
    <location>
        <position position="14"/>
    </location>
    <ligand>
        <name>UTP</name>
        <dbReference type="ChEBI" id="CHEBI:46398"/>
    </ligand>
</feature>
<feature type="binding site" evidence="1">
    <location>
        <begin position="15"/>
        <end position="20"/>
    </location>
    <ligand>
        <name>ATP</name>
        <dbReference type="ChEBI" id="CHEBI:30616"/>
    </ligand>
</feature>
<feature type="binding site" evidence="1">
    <location>
        <position position="55"/>
    </location>
    <ligand>
        <name>L-glutamine</name>
        <dbReference type="ChEBI" id="CHEBI:58359"/>
    </ligand>
</feature>
<feature type="binding site" evidence="1">
    <location>
        <position position="72"/>
    </location>
    <ligand>
        <name>ATP</name>
        <dbReference type="ChEBI" id="CHEBI:30616"/>
    </ligand>
</feature>
<feature type="binding site" evidence="1">
    <location>
        <position position="72"/>
    </location>
    <ligand>
        <name>Mg(2+)</name>
        <dbReference type="ChEBI" id="CHEBI:18420"/>
    </ligand>
</feature>
<feature type="binding site" evidence="1">
    <location>
        <position position="142"/>
    </location>
    <ligand>
        <name>Mg(2+)</name>
        <dbReference type="ChEBI" id="CHEBI:18420"/>
    </ligand>
</feature>
<feature type="binding site" evidence="1">
    <location>
        <begin position="149"/>
        <end position="151"/>
    </location>
    <ligand>
        <name>CTP</name>
        <dbReference type="ChEBI" id="CHEBI:37563"/>
        <note>allosteric inhibitor</note>
    </ligand>
</feature>
<feature type="binding site" evidence="1">
    <location>
        <begin position="189"/>
        <end position="194"/>
    </location>
    <ligand>
        <name>CTP</name>
        <dbReference type="ChEBI" id="CHEBI:37563"/>
        <note>allosteric inhibitor</note>
    </ligand>
</feature>
<feature type="binding site" evidence="1">
    <location>
        <begin position="189"/>
        <end position="194"/>
    </location>
    <ligand>
        <name>UTP</name>
        <dbReference type="ChEBI" id="CHEBI:46398"/>
    </ligand>
</feature>
<feature type="binding site" evidence="1">
    <location>
        <position position="225"/>
    </location>
    <ligand>
        <name>CTP</name>
        <dbReference type="ChEBI" id="CHEBI:37563"/>
        <note>allosteric inhibitor</note>
    </ligand>
</feature>
<feature type="binding site" evidence="1">
    <location>
        <position position="225"/>
    </location>
    <ligand>
        <name>UTP</name>
        <dbReference type="ChEBI" id="CHEBI:46398"/>
    </ligand>
</feature>
<feature type="binding site" evidence="1">
    <location>
        <position position="243"/>
    </location>
    <ligand>
        <name>ATP</name>
        <dbReference type="ChEBI" id="CHEBI:30616"/>
    </ligand>
</feature>
<feature type="binding site" evidence="1">
    <location>
        <position position="355"/>
    </location>
    <ligand>
        <name>L-glutamine</name>
        <dbReference type="ChEBI" id="CHEBI:58359"/>
    </ligand>
</feature>
<feature type="binding site" evidence="1">
    <location>
        <begin position="383"/>
        <end position="386"/>
    </location>
    <ligand>
        <name>L-glutamine</name>
        <dbReference type="ChEBI" id="CHEBI:58359"/>
    </ligand>
</feature>
<feature type="binding site" evidence="1">
    <location>
        <position position="406"/>
    </location>
    <ligand>
        <name>L-glutamine</name>
        <dbReference type="ChEBI" id="CHEBI:58359"/>
    </ligand>
</feature>
<feature type="binding site" evidence="1">
    <location>
        <position position="464"/>
    </location>
    <ligand>
        <name>L-glutamine</name>
        <dbReference type="ChEBI" id="CHEBI:58359"/>
    </ligand>
</feature>
<evidence type="ECO:0000255" key="1">
    <source>
        <dbReference type="HAMAP-Rule" id="MF_01227"/>
    </source>
</evidence>
<evidence type="ECO:0000269" key="2">
    <source>
    </source>
</evidence>
<evidence type="ECO:0000303" key="3">
    <source>
    </source>
</evidence>
<protein>
    <recommendedName>
        <fullName evidence="1 3">CTP synthase</fullName>
        <ecNumber evidence="1 2">6.3.4.2</ecNumber>
    </recommendedName>
    <alternativeName>
        <fullName evidence="1">Cytidine 5'-triphosphate synthase</fullName>
    </alternativeName>
    <alternativeName>
        <fullName evidence="1">Cytidine triphosphate synthetase</fullName>
        <shortName evidence="1">CTP synthetase</shortName>
        <shortName evidence="1">CTPS</shortName>
    </alternativeName>
    <alternativeName>
        <fullName evidence="1">UTP--ammonia ligase</fullName>
    </alternativeName>
</protein>
<comment type="function">
    <text evidence="1 2">Catalyzes the ATP-dependent amination of UTP to CTP with either L-glutamine or ammonia as the source of nitrogen. Is essential for the synthesis of CTP de novo. Contrary to other bacterial CTP synthases, the lactococcal enzyme is also able to convert dUTP to dCTP, but this reaction may not play a significant physiological role (PubMed:11500486). Regulates intracellular CTP levels through interactions with the four ribonucleotide triphosphates (By similarity).</text>
</comment>
<comment type="catalytic activity">
    <reaction evidence="1 2">
        <text>UTP + L-glutamine + ATP + H2O = CTP + L-glutamate + ADP + phosphate + 2 H(+)</text>
        <dbReference type="Rhea" id="RHEA:26426"/>
        <dbReference type="ChEBI" id="CHEBI:15377"/>
        <dbReference type="ChEBI" id="CHEBI:15378"/>
        <dbReference type="ChEBI" id="CHEBI:29985"/>
        <dbReference type="ChEBI" id="CHEBI:30616"/>
        <dbReference type="ChEBI" id="CHEBI:37563"/>
        <dbReference type="ChEBI" id="CHEBI:43474"/>
        <dbReference type="ChEBI" id="CHEBI:46398"/>
        <dbReference type="ChEBI" id="CHEBI:58359"/>
        <dbReference type="ChEBI" id="CHEBI:456216"/>
        <dbReference type="EC" id="6.3.4.2"/>
    </reaction>
</comment>
<comment type="catalytic activity">
    <reaction evidence="1">
        <text>L-glutamine + H2O = L-glutamate + NH4(+)</text>
        <dbReference type="Rhea" id="RHEA:15889"/>
        <dbReference type="ChEBI" id="CHEBI:15377"/>
        <dbReference type="ChEBI" id="CHEBI:28938"/>
        <dbReference type="ChEBI" id="CHEBI:29985"/>
        <dbReference type="ChEBI" id="CHEBI:58359"/>
    </reaction>
</comment>
<comment type="catalytic activity">
    <reaction evidence="1 2">
        <text>UTP + NH4(+) + ATP = CTP + ADP + phosphate + 2 H(+)</text>
        <dbReference type="Rhea" id="RHEA:16597"/>
        <dbReference type="ChEBI" id="CHEBI:15378"/>
        <dbReference type="ChEBI" id="CHEBI:28938"/>
        <dbReference type="ChEBI" id="CHEBI:30616"/>
        <dbReference type="ChEBI" id="CHEBI:37563"/>
        <dbReference type="ChEBI" id="CHEBI:43474"/>
        <dbReference type="ChEBI" id="CHEBI:46398"/>
        <dbReference type="ChEBI" id="CHEBI:456216"/>
    </reaction>
</comment>
<comment type="activity regulation">
    <text evidence="1 2">Allosterically activated by GTP, when glutamine is the substrate (PubMed:11500486). GTP has no effect on the reaction when ammonia is the substrate. The allosteric effector GTP functions by stabilizing the protein conformation that binds the tetrahedral intermediate(s) formed during glutamine hydrolysis (By similarity). Also activated by magnesium (PubMed:11500486). Allosterically inhibited by CTP (PubMed:11500486).</text>
</comment>
<comment type="biophysicochemical properties">
    <kinetics>
        <KM evidence="2">0.52 mM for L-glutamine</KM>
        <KM evidence="2">42.9 mM for ammonia</KM>
    </kinetics>
</comment>
<comment type="pathway">
    <text evidence="1 2">Pyrimidine metabolism; CTP biosynthesis via de novo pathway; CTP from UDP: step 2/2.</text>
</comment>
<comment type="subunit">
    <text evidence="2">Homotetramer. In contrast to E.coli CTP synthase, remains a tetramer at dilute enzyme concentrations even in the absence of Mg(2+), ATP and UTP.</text>
</comment>
<comment type="disruption phenotype">
    <text evidence="2">Cells lacking this gene require cytidine for growth, proving that in L.lactis, the pyrG product is the only enzyme responsible for the amination of UTP to CTP.</text>
</comment>
<comment type="miscellaneous">
    <text evidence="1">CTPSs have evolved a hybrid strategy for distinguishing between UTP and CTP. The overlapping regions of the product feedback inhibitory and substrate sites recognize a common feature in both compounds, the triphosphate moiety. To differentiate isosteric substrate and product pyrimidine rings, an additional pocket far from the expected kinase/ligase catalytic site, specifically recognizes the cytosine and ribose portions of the product inhibitor.</text>
</comment>
<comment type="similarity">
    <text evidence="1">Belongs to the CTP synthase family.</text>
</comment>